<organism>
    <name type="scientific">Bradyrhizobium diazoefficiens (strain JCM 10833 / BCRC 13528 / IAM 13628 / NBRC 14792 / USDA 110)</name>
    <dbReference type="NCBI Taxonomy" id="224911"/>
    <lineage>
        <taxon>Bacteria</taxon>
        <taxon>Pseudomonadati</taxon>
        <taxon>Pseudomonadota</taxon>
        <taxon>Alphaproteobacteria</taxon>
        <taxon>Hyphomicrobiales</taxon>
        <taxon>Nitrobacteraceae</taxon>
        <taxon>Bradyrhizobium</taxon>
    </lineage>
</organism>
<feature type="chain" id="PRO_0000364472" description="Fructose-1,6-bisphosphatase class 1">
    <location>
        <begin position="1"/>
        <end position="345"/>
    </location>
</feature>
<feature type="binding site" evidence="1">
    <location>
        <position position="90"/>
    </location>
    <ligand>
        <name>Mg(2+)</name>
        <dbReference type="ChEBI" id="CHEBI:18420"/>
        <label>1</label>
    </ligand>
</feature>
<feature type="binding site" evidence="1">
    <location>
        <position position="109"/>
    </location>
    <ligand>
        <name>Mg(2+)</name>
        <dbReference type="ChEBI" id="CHEBI:18420"/>
        <label>1</label>
    </ligand>
</feature>
<feature type="binding site" evidence="1">
    <location>
        <position position="109"/>
    </location>
    <ligand>
        <name>Mg(2+)</name>
        <dbReference type="ChEBI" id="CHEBI:18420"/>
        <label>2</label>
    </ligand>
</feature>
<feature type="binding site" evidence="1">
    <location>
        <position position="111"/>
    </location>
    <ligand>
        <name>Mg(2+)</name>
        <dbReference type="ChEBI" id="CHEBI:18420"/>
        <label>1</label>
    </ligand>
</feature>
<feature type="binding site" evidence="1">
    <location>
        <begin position="112"/>
        <end position="115"/>
    </location>
    <ligand>
        <name>substrate</name>
    </ligand>
</feature>
<feature type="binding site" evidence="1">
    <location>
        <position position="112"/>
    </location>
    <ligand>
        <name>Mg(2+)</name>
        <dbReference type="ChEBI" id="CHEBI:18420"/>
        <label>2</label>
    </ligand>
</feature>
<feature type="binding site" evidence="1">
    <location>
        <position position="200"/>
    </location>
    <ligand>
        <name>substrate</name>
    </ligand>
</feature>
<feature type="binding site" evidence="1">
    <location>
        <position position="272"/>
    </location>
    <ligand>
        <name>Mg(2+)</name>
        <dbReference type="ChEBI" id="CHEBI:18420"/>
        <label>2</label>
    </ligand>
</feature>
<accession>Q8GKS1</accession>
<accession>Q79UB2</accession>
<keyword id="KW-0119">Carbohydrate metabolism</keyword>
<keyword id="KW-0963">Cytoplasm</keyword>
<keyword id="KW-0378">Hydrolase</keyword>
<keyword id="KW-0460">Magnesium</keyword>
<keyword id="KW-0479">Metal-binding</keyword>
<keyword id="KW-1185">Reference proteome</keyword>
<evidence type="ECO:0000255" key="1">
    <source>
        <dbReference type="HAMAP-Rule" id="MF_01855"/>
    </source>
</evidence>
<proteinExistence type="inferred from homology"/>
<reference key="1">
    <citation type="submission" date="2002-09" db="EMBL/GenBank/DDBJ databases">
        <title>The Bradyrhizobium japonicum cbb locus.</title>
        <authorList>
            <person name="Fischer H.-M."/>
            <person name="Bauer E."/>
            <person name="Hennecke H."/>
        </authorList>
    </citation>
    <scope>NUCLEOTIDE SEQUENCE [GENOMIC DNA]</scope>
</reference>
<reference key="2">
    <citation type="journal article" date="2002" name="DNA Res.">
        <title>Complete genomic sequence of nitrogen-fixing symbiotic bacterium Bradyrhizobium japonicum USDA110.</title>
        <authorList>
            <person name="Kaneko T."/>
            <person name="Nakamura Y."/>
            <person name="Sato S."/>
            <person name="Minamisawa K."/>
            <person name="Uchiumi T."/>
            <person name="Sasamoto S."/>
            <person name="Watanabe A."/>
            <person name="Idesawa K."/>
            <person name="Iriguchi M."/>
            <person name="Kawashima K."/>
            <person name="Kohara M."/>
            <person name="Matsumoto M."/>
            <person name="Shimpo S."/>
            <person name="Tsuruoka H."/>
            <person name="Wada T."/>
            <person name="Yamada M."/>
            <person name="Tabata S."/>
        </authorList>
    </citation>
    <scope>NUCLEOTIDE SEQUENCE [LARGE SCALE GENOMIC DNA]</scope>
    <source>
        <strain>JCM 10833 / BCRC 13528 / IAM 13628 / NBRC 14792 / USDA 110</strain>
    </source>
</reference>
<sequence length="345" mass="37113">MTGQLRLDDHLQRYSETAPHALAVATAVDAIAAAAIEIADLIGAGDLADASGLTTGRNSDGDVQRDLDVQADAILRRCLGKLSIAALASEEMREPQIGDRAARICVAIDPLDGSSNIDINMTVGTIFSILPAPDDLALAFHQRGSAQFAAGFVTYGPQTSLVLTLGDGVDIFTLDRKAGCFRLARSAIQISEAGEEFAINASNRRHWDPPVRAFIDECLAGVEGPANHDFNMRWVGSLVAEAYRILTRGGVFLYPSDARPGYGDGRLRLTYEAHPMAYIIEQAGGSASTGRERILDLSAQSLHQRVPLIMGSSNEVRRVEELHCDPLLVASISAPLFARRGFFRL</sequence>
<gene>
    <name evidence="1" type="primary">fbp</name>
    <name type="ordered locus">blr2581</name>
</gene>
<name>F16PA_BRADU</name>
<dbReference type="EC" id="3.1.3.11" evidence="1"/>
<dbReference type="EMBL" id="AY150332">
    <property type="protein sequence ID" value="AAN61144.1"/>
    <property type="molecule type" value="Genomic_DNA"/>
</dbReference>
<dbReference type="EMBL" id="BA000040">
    <property type="protein sequence ID" value="BAC47846.1"/>
    <property type="molecule type" value="Genomic_DNA"/>
</dbReference>
<dbReference type="RefSeq" id="NP_769221.1">
    <property type="nucleotide sequence ID" value="NC_004463.1"/>
</dbReference>
<dbReference type="RefSeq" id="WP_011085367.1">
    <property type="nucleotide sequence ID" value="NC_004463.1"/>
</dbReference>
<dbReference type="SMR" id="Q8GKS1"/>
<dbReference type="FunCoup" id="Q8GKS1">
    <property type="interactions" value="551"/>
</dbReference>
<dbReference type="STRING" id="224911.AAV28_09865"/>
<dbReference type="EnsemblBacteria" id="BAC47846">
    <property type="protein sequence ID" value="BAC47846"/>
    <property type="gene ID" value="BAC47846"/>
</dbReference>
<dbReference type="GeneID" id="46489627"/>
<dbReference type="KEGG" id="bja:blr2581"/>
<dbReference type="PATRIC" id="fig|224911.44.peg.2170"/>
<dbReference type="eggNOG" id="COG0158">
    <property type="taxonomic scope" value="Bacteria"/>
</dbReference>
<dbReference type="HOGENOM" id="CLU_039977_0_0_5"/>
<dbReference type="InParanoid" id="Q8GKS1"/>
<dbReference type="OrthoDB" id="9806756at2"/>
<dbReference type="PhylomeDB" id="Q8GKS1"/>
<dbReference type="UniPathway" id="UPA00138"/>
<dbReference type="Proteomes" id="UP000002526">
    <property type="component" value="Chromosome"/>
</dbReference>
<dbReference type="GO" id="GO:0005737">
    <property type="term" value="C:cytoplasm"/>
    <property type="evidence" value="ECO:0000318"/>
    <property type="project" value="GO_Central"/>
</dbReference>
<dbReference type="GO" id="GO:0005829">
    <property type="term" value="C:cytosol"/>
    <property type="evidence" value="ECO:0000318"/>
    <property type="project" value="GO_Central"/>
</dbReference>
<dbReference type="GO" id="GO:0042132">
    <property type="term" value="F:fructose 1,6-bisphosphate 1-phosphatase activity"/>
    <property type="evidence" value="ECO:0000318"/>
    <property type="project" value="GO_Central"/>
</dbReference>
<dbReference type="GO" id="GO:0000287">
    <property type="term" value="F:magnesium ion binding"/>
    <property type="evidence" value="ECO:0007669"/>
    <property type="project" value="UniProtKB-UniRule"/>
</dbReference>
<dbReference type="GO" id="GO:0030388">
    <property type="term" value="P:fructose 1,6-bisphosphate metabolic process"/>
    <property type="evidence" value="ECO:0000318"/>
    <property type="project" value="GO_Central"/>
</dbReference>
<dbReference type="GO" id="GO:0006002">
    <property type="term" value="P:fructose 6-phosphate metabolic process"/>
    <property type="evidence" value="ECO:0000318"/>
    <property type="project" value="GO_Central"/>
</dbReference>
<dbReference type="GO" id="GO:0006000">
    <property type="term" value="P:fructose metabolic process"/>
    <property type="evidence" value="ECO:0000318"/>
    <property type="project" value="GO_Central"/>
</dbReference>
<dbReference type="GO" id="GO:0006094">
    <property type="term" value="P:gluconeogenesis"/>
    <property type="evidence" value="ECO:0000318"/>
    <property type="project" value="GO_Central"/>
</dbReference>
<dbReference type="CDD" id="cd00354">
    <property type="entry name" value="FBPase"/>
    <property type="match status" value="1"/>
</dbReference>
<dbReference type="FunFam" id="3.40.190.80:FF:000011">
    <property type="entry name" value="Fructose-1,6-bisphosphatase class 1"/>
    <property type="match status" value="1"/>
</dbReference>
<dbReference type="Gene3D" id="3.40.190.80">
    <property type="match status" value="1"/>
</dbReference>
<dbReference type="Gene3D" id="3.30.540.10">
    <property type="entry name" value="Fructose-1,6-Bisphosphatase, subunit A, domain 1"/>
    <property type="match status" value="1"/>
</dbReference>
<dbReference type="HAMAP" id="MF_01855">
    <property type="entry name" value="FBPase_class1"/>
    <property type="match status" value="1"/>
</dbReference>
<dbReference type="InterPro" id="IPR044015">
    <property type="entry name" value="FBPase_C_dom"/>
</dbReference>
<dbReference type="InterPro" id="IPR000146">
    <property type="entry name" value="FBPase_class-1"/>
</dbReference>
<dbReference type="InterPro" id="IPR033391">
    <property type="entry name" value="FBPase_N"/>
</dbReference>
<dbReference type="InterPro" id="IPR028343">
    <property type="entry name" value="FBPtase"/>
</dbReference>
<dbReference type="NCBIfam" id="NF006779">
    <property type="entry name" value="PRK09293.1-3"/>
    <property type="match status" value="1"/>
</dbReference>
<dbReference type="NCBIfam" id="NF006780">
    <property type="entry name" value="PRK09293.1-4"/>
    <property type="match status" value="1"/>
</dbReference>
<dbReference type="PANTHER" id="PTHR11556">
    <property type="entry name" value="FRUCTOSE-1,6-BISPHOSPHATASE-RELATED"/>
    <property type="match status" value="1"/>
</dbReference>
<dbReference type="PANTHER" id="PTHR11556:SF35">
    <property type="entry name" value="SEDOHEPTULOSE-1,7-BISPHOSPHATASE, CHLOROPLASTIC"/>
    <property type="match status" value="1"/>
</dbReference>
<dbReference type="Pfam" id="PF00316">
    <property type="entry name" value="FBPase"/>
    <property type="match status" value="1"/>
</dbReference>
<dbReference type="Pfam" id="PF18913">
    <property type="entry name" value="FBPase_C"/>
    <property type="match status" value="1"/>
</dbReference>
<dbReference type="PIRSF" id="PIRSF500210">
    <property type="entry name" value="FBPtase"/>
    <property type="match status" value="1"/>
</dbReference>
<dbReference type="PIRSF" id="PIRSF000904">
    <property type="entry name" value="FBPtase_SBPase"/>
    <property type="match status" value="1"/>
</dbReference>
<dbReference type="PRINTS" id="PR00115">
    <property type="entry name" value="F16BPHPHTASE"/>
</dbReference>
<dbReference type="SUPFAM" id="SSF56655">
    <property type="entry name" value="Carbohydrate phosphatase"/>
    <property type="match status" value="1"/>
</dbReference>
<comment type="catalytic activity">
    <reaction evidence="1">
        <text>beta-D-fructose 1,6-bisphosphate + H2O = beta-D-fructose 6-phosphate + phosphate</text>
        <dbReference type="Rhea" id="RHEA:11064"/>
        <dbReference type="ChEBI" id="CHEBI:15377"/>
        <dbReference type="ChEBI" id="CHEBI:32966"/>
        <dbReference type="ChEBI" id="CHEBI:43474"/>
        <dbReference type="ChEBI" id="CHEBI:57634"/>
        <dbReference type="EC" id="3.1.3.11"/>
    </reaction>
</comment>
<comment type="cofactor">
    <cofactor evidence="1">
        <name>Mg(2+)</name>
        <dbReference type="ChEBI" id="CHEBI:18420"/>
    </cofactor>
    <text evidence="1">Binds 2 magnesium ions per subunit.</text>
</comment>
<comment type="pathway">
    <text evidence="1">Carbohydrate biosynthesis; gluconeogenesis.</text>
</comment>
<comment type="subunit">
    <text evidence="1">Homotetramer.</text>
</comment>
<comment type="subcellular location">
    <subcellularLocation>
        <location evidence="1">Cytoplasm</location>
    </subcellularLocation>
</comment>
<comment type="similarity">
    <text evidence="1">Belongs to the FBPase class 1 family.</text>
</comment>
<protein>
    <recommendedName>
        <fullName evidence="1">Fructose-1,6-bisphosphatase class 1</fullName>
        <shortName evidence="1">FBPase class 1</shortName>
        <ecNumber evidence="1">3.1.3.11</ecNumber>
    </recommendedName>
    <alternativeName>
        <fullName evidence="1">D-fructose-1,6-bisphosphate 1-phosphohydrolase class 1</fullName>
    </alternativeName>
</protein>